<accession>Q2PQN0</accession>
<organism>
    <name type="scientific">Glossina morsitans morsitans</name>
    <name type="common">Savannah tsetse fly</name>
    <dbReference type="NCBI Taxonomy" id="37546"/>
    <lineage>
        <taxon>Eukaryota</taxon>
        <taxon>Metazoa</taxon>
        <taxon>Ecdysozoa</taxon>
        <taxon>Arthropoda</taxon>
        <taxon>Hexapoda</taxon>
        <taxon>Insecta</taxon>
        <taxon>Pterygota</taxon>
        <taxon>Neoptera</taxon>
        <taxon>Endopterygota</taxon>
        <taxon>Diptera</taxon>
        <taxon>Brachycera</taxon>
        <taxon>Muscomorpha</taxon>
        <taxon>Hippoboscoidea</taxon>
        <taxon>Glossinidae</taxon>
        <taxon>Glossina</taxon>
    </lineage>
</organism>
<proteinExistence type="evidence at transcript level"/>
<gene>
    <name type="primary">Idgf1</name>
</gene>
<reference key="1">
    <citation type="journal article" date="2006" name="Insect Mol. Biol.">
        <title>Analysis of fat body transcriptome from the adult tsetse fly, Glossina morsitans morsitans.</title>
        <authorList>
            <person name="Attardo G.M."/>
            <person name="Strickler-Dinglasan P."/>
            <person name="Perkin S.A.H."/>
            <person name="Caler E."/>
            <person name="Bonaldo M.F."/>
            <person name="Soares M.B."/>
            <person name="El-Sayeed N.M.A."/>
            <person name="Aksoy S."/>
        </authorList>
    </citation>
    <scope>NUCLEOTIDE SEQUENCE [LARGE SCALE MRNA]</scope>
    <source>
        <tissue>Fat body</tissue>
    </source>
</reference>
<name>IDGF1_GLOMM</name>
<evidence type="ECO:0000250" key="1"/>
<evidence type="ECO:0000255" key="2"/>
<evidence type="ECO:0000255" key="3">
    <source>
        <dbReference type="PROSITE-ProRule" id="PRU01258"/>
    </source>
</evidence>
<evidence type="ECO:0000305" key="4"/>
<protein>
    <recommendedName>
        <fullName>Chitinase-like protein Idgf1</fullName>
    </recommendedName>
    <alternativeName>
        <fullName>Imaginal disk growth factor protein 1</fullName>
    </alternativeName>
</protein>
<dbReference type="EMBL" id="DQ307193">
    <property type="protein sequence ID" value="ABC25093.1"/>
    <property type="molecule type" value="mRNA"/>
</dbReference>
<dbReference type="SMR" id="Q2PQN0"/>
<dbReference type="STRING" id="37546.Q2PQN0"/>
<dbReference type="CAZy" id="GH18">
    <property type="family name" value="Glycoside Hydrolase Family 18"/>
</dbReference>
<dbReference type="GlyCosmos" id="Q2PQN0">
    <property type="glycosylation" value="3 sites, No reported glycans"/>
</dbReference>
<dbReference type="Proteomes" id="UP000092444">
    <property type="component" value="Unassembled WGS sequence"/>
</dbReference>
<dbReference type="GO" id="GO:0005576">
    <property type="term" value="C:extracellular region"/>
    <property type="evidence" value="ECO:0007669"/>
    <property type="project" value="UniProtKB-SubCell"/>
</dbReference>
<dbReference type="GO" id="GO:0008061">
    <property type="term" value="F:chitin binding"/>
    <property type="evidence" value="ECO:0007669"/>
    <property type="project" value="InterPro"/>
</dbReference>
<dbReference type="GO" id="GO:0004568">
    <property type="term" value="F:chitinase activity"/>
    <property type="evidence" value="ECO:0007669"/>
    <property type="project" value="TreeGrafter"/>
</dbReference>
<dbReference type="GO" id="GO:0005975">
    <property type="term" value="P:carbohydrate metabolic process"/>
    <property type="evidence" value="ECO:0007669"/>
    <property type="project" value="InterPro"/>
</dbReference>
<dbReference type="GO" id="GO:0006032">
    <property type="term" value="P:chitin catabolic process"/>
    <property type="evidence" value="ECO:0007669"/>
    <property type="project" value="TreeGrafter"/>
</dbReference>
<dbReference type="CDD" id="cd02873">
    <property type="entry name" value="GH18_IDGF"/>
    <property type="match status" value="1"/>
</dbReference>
<dbReference type="FunFam" id="3.20.20.80:FF:000071">
    <property type="entry name" value="Imaginal disc growth factor"/>
    <property type="match status" value="1"/>
</dbReference>
<dbReference type="Gene3D" id="3.10.50.10">
    <property type="match status" value="1"/>
</dbReference>
<dbReference type="Gene3D" id="3.20.20.80">
    <property type="entry name" value="Glycosidases"/>
    <property type="match status" value="1"/>
</dbReference>
<dbReference type="InterPro" id="IPR011583">
    <property type="entry name" value="Chitinase_II/V-like_cat"/>
</dbReference>
<dbReference type="InterPro" id="IPR029070">
    <property type="entry name" value="Chitinase_insertion_sf"/>
</dbReference>
<dbReference type="InterPro" id="IPR001223">
    <property type="entry name" value="Glyco_hydro18_cat"/>
</dbReference>
<dbReference type="InterPro" id="IPR017853">
    <property type="entry name" value="Glycoside_hydrolase_SF"/>
</dbReference>
<dbReference type="InterPro" id="IPR050314">
    <property type="entry name" value="Glycosyl_Hydrlase_18"/>
</dbReference>
<dbReference type="InterPro" id="IPR015520">
    <property type="entry name" value="IDGF"/>
</dbReference>
<dbReference type="PANTHER" id="PTHR11177">
    <property type="entry name" value="CHITINASE"/>
    <property type="match status" value="1"/>
</dbReference>
<dbReference type="PANTHER" id="PTHR11177:SF235">
    <property type="entry name" value="CHITINASE-LIKE PROTEIN IDGF1-RELATED"/>
    <property type="match status" value="1"/>
</dbReference>
<dbReference type="Pfam" id="PF00704">
    <property type="entry name" value="Glyco_hydro_18"/>
    <property type="match status" value="1"/>
</dbReference>
<dbReference type="SMART" id="SM00636">
    <property type="entry name" value="Glyco_18"/>
    <property type="match status" value="1"/>
</dbReference>
<dbReference type="SUPFAM" id="SSF51445">
    <property type="entry name" value="(Trans)glycosidases"/>
    <property type="match status" value="1"/>
</dbReference>
<dbReference type="SUPFAM" id="SSF54556">
    <property type="entry name" value="Chitinase insertion domain"/>
    <property type="match status" value="1"/>
</dbReference>
<dbReference type="PROSITE" id="PS51910">
    <property type="entry name" value="GH18_2"/>
    <property type="match status" value="1"/>
</dbReference>
<comment type="function">
    <text evidence="1">Cooperates with insulin-like peptides to stimulate the proliferation, polarization and motility of imaginal disk cells. May act by stabilizing the binding of insulin-like peptides to its receptor through a simultaneous interaction with both molecules to form a multiprotein signaling complex (By similarity).</text>
</comment>
<comment type="subcellular location">
    <subcellularLocation>
        <location evidence="1">Secreted</location>
    </subcellularLocation>
</comment>
<comment type="PTM">
    <text evidence="1">Glycosylated.</text>
</comment>
<comment type="miscellaneous">
    <text>Lacks the typical Glu active site in position 157 that is replaced by a Lys residue, preventing the hydrolase activity. Its precise function remains unclear.</text>
</comment>
<comment type="similarity">
    <text evidence="4">Belongs to the glycosyl hydrolase 18 family. IDGF subfamily.</text>
</comment>
<sequence>MTSLLFVILNIILTLHLCAGQTPAADNNKRLICYYDAQSYLRPGFAEMKLSFLKTAAEFCTHLIYGYADLNDDLYEISSLNVDLDMFHYKEITSLKAEFPHLRIYLSIGGDHDNGHYDAGKYMRFLESGKDRQNTFIESAIHLLKMNDFDGLDLAFKLPTNKPRKVHSEFGLLWKKFKKLFTGDFIVDPDAALHKQQYTEFVGNLARTFRNANLSLTMTVLPNVNSTWYFDVSEIYNNFEYINLFSFDFLTPLRNPEEADYTAPIYLRDEENRLAHYNIDYQMNYWVNHGCPAHKLNLGIATYGRAWKLSAKSGISCKPVVRETLGPAEPGLQSNISGLLSWPEICSKLAITNGAGYKGADAPVRKVQDLERLYGNYAFRPADDNDEHGIWISFDDPDFAGIKTNFVKTKFIGGVALYDLSYDDFRGLCTGVKFPILRSVRGHL</sequence>
<feature type="signal peptide" evidence="2">
    <location>
        <begin position="1"/>
        <end position="20"/>
    </location>
</feature>
<feature type="chain" id="PRO_0000291639" description="Chitinase-like protein Idgf1">
    <location>
        <begin position="21"/>
        <end position="444"/>
    </location>
</feature>
<feature type="domain" description="GH18" evidence="3">
    <location>
        <begin position="29"/>
        <end position="444"/>
    </location>
</feature>
<feature type="glycosylation site" description="N-linked (GlcNAc...) asparagine" evidence="2">
    <location>
        <position position="213"/>
    </location>
</feature>
<feature type="glycosylation site" description="N-linked (GlcNAc...) asparagine" evidence="2">
    <location>
        <position position="225"/>
    </location>
</feature>
<feature type="glycosylation site" description="N-linked (GlcNAc...) asparagine" evidence="2">
    <location>
        <position position="335"/>
    </location>
</feature>
<feature type="disulfide bond" evidence="3">
    <location>
        <begin position="33"/>
        <end position="60"/>
    </location>
</feature>
<feature type="disulfide bond" evidence="1">
    <location>
        <begin position="346"/>
        <end position="429"/>
    </location>
</feature>
<keyword id="KW-0217">Developmental protein</keyword>
<keyword id="KW-1015">Disulfide bond</keyword>
<keyword id="KW-0325">Glycoprotein</keyword>
<keyword id="KW-0964">Secreted</keyword>
<keyword id="KW-0732">Signal</keyword>